<evidence type="ECO:0000255" key="1">
    <source>
        <dbReference type="HAMAP-Rule" id="MF_00347"/>
    </source>
</evidence>
<evidence type="ECO:0000256" key="2">
    <source>
        <dbReference type="SAM" id="MobiDB-lite"/>
    </source>
</evidence>
<protein>
    <recommendedName>
        <fullName evidence="1">Polyphosphate kinase</fullName>
        <ecNumber evidence="1">2.7.4.1</ecNumber>
    </recommendedName>
    <alternativeName>
        <fullName evidence="1">ATP-polyphosphate phosphotransferase</fullName>
    </alternativeName>
    <alternativeName>
        <fullName evidence="1">Polyphosphoric acid kinase</fullName>
    </alternativeName>
</protein>
<keyword id="KW-0067">ATP-binding</keyword>
<keyword id="KW-0418">Kinase</keyword>
<keyword id="KW-0460">Magnesium</keyword>
<keyword id="KW-0479">Metal-binding</keyword>
<keyword id="KW-0547">Nucleotide-binding</keyword>
<keyword id="KW-0597">Phosphoprotein</keyword>
<keyword id="KW-1185">Reference proteome</keyword>
<keyword id="KW-0808">Transferase</keyword>
<reference key="1">
    <citation type="journal article" date="2007" name="Science">
        <title>Legumes symbioses: absence of nod genes in photosynthetic bradyrhizobia.</title>
        <authorList>
            <person name="Giraud E."/>
            <person name="Moulin L."/>
            <person name="Vallenet D."/>
            <person name="Barbe V."/>
            <person name="Cytryn E."/>
            <person name="Avarre J.-C."/>
            <person name="Jaubert M."/>
            <person name="Simon D."/>
            <person name="Cartieaux F."/>
            <person name="Prin Y."/>
            <person name="Bena G."/>
            <person name="Hannibal L."/>
            <person name="Fardoux J."/>
            <person name="Kojadinovic M."/>
            <person name="Vuillet L."/>
            <person name="Lajus A."/>
            <person name="Cruveiller S."/>
            <person name="Rouy Z."/>
            <person name="Mangenot S."/>
            <person name="Segurens B."/>
            <person name="Dossat C."/>
            <person name="Franck W.L."/>
            <person name="Chang W.-S."/>
            <person name="Saunders E."/>
            <person name="Bruce D."/>
            <person name="Richardson P."/>
            <person name="Normand P."/>
            <person name="Dreyfus B."/>
            <person name="Pignol D."/>
            <person name="Stacey G."/>
            <person name="Emerich D."/>
            <person name="Vermeglio A."/>
            <person name="Medigue C."/>
            <person name="Sadowsky M."/>
        </authorList>
    </citation>
    <scope>NUCLEOTIDE SEQUENCE [LARGE SCALE GENOMIC DNA]</scope>
    <source>
        <strain>ORS 278</strain>
    </source>
</reference>
<organism>
    <name type="scientific">Bradyrhizobium sp. (strain ORS 278)</name>
    <dbReference type="NCBI Taxonomy" id="114615"/>
    <lineage>
        <taxon>Bacteria</taxon>
        <taxon>Pseudomonadati</taxon>
        <taxon>Pseudomonadota</taxon>
        <taxon>Alphaproteobacteria</taxon>
        <taxon>Hyphomicrobiales</taxon>
        <taxon>Nitrobacteraceae</taxon>
        <taxon>Bradyrhizobium</taxon>
    </lineage>
</organism>
<gene>
    <name evidence="1" type="primary">ppk</name>
    <name type="ordered locus">BRADO3341</name>
</gene>
<accession>A4YTA9</accession>
<dbReference type="EC" id="2.7.4.1" evidence="1"/>
<dbReference type="EMBL" id="CU234118">
    <property type="protein sequence ID" value="CAL77135.1"/>
    <property type="molecule type" value="Genomic_DNA"/>
</dbReference>
<dbReference type="RefSeq" id="WP_011926291.1">
    <property type="nucleotide sequence ID" value="NC_009445.1"/>
</dbReference>
<dbReference type="SMR" id="A4YTA9"/>
<dbReference type="STRING" id="114615.BRADO3341"/>
<dbReference type="KEGG" id="bra:BRADO3341"/>
<dbReference type="eggNOG" id="COG0855">
    <property type="taxonomic scope" value="Bacteria"/>
</dbReference>
<dbReference type="HOGENOM" id="CLU_009678_5_0_5"/>
<dbReference type="OrthoDB" id="9761456at2"/>
<dbReference type="Proteomes" id="UP000001994">
    <property type="component" value="Chromosome"/>
</dbReference>
<dbReference type="GO" id="GO:0009358">
    <property type="term" value="C:polyphosphate kinase complex"/>
    <property type="evidence" value="ECO:0007669"/>
    <property type="project" value="InterPro"/>
</dbReference>
<dbReference type="GO" id="GO:0005524">
    <property type="term" value="F:ATP binding"/>
    <property type="evidence" value="ECO:0007669"/>
    <property type="project" value="UniProtKB-KW"/>
</dbReference>
<dbReference type="GO" id="GO:0046872">
    <property type="term" value="F:metal ion binding"/>
    <property type="evidence" value="ECO:0007669"/>
    <property type="project" value="UniProtKB-KW"/>
</dbReference>
<dbReference type="GO" id="GO:0008976">
    <property type="term" value="F:polyphosphate kinase activity"/>
    <property type="evidence" value="ECO:0007669"/>
    <property type="project" value="UniProtKB-UniRule"/>
</dbReference>
<dbReference type="GO" id="GO:0006799">
    <property type="term" value="P:polyphosphate biosynthetic process"/>
    <property type="evidence" value="ECO:0007669"/>
    <property type="project" value="UniProtKB-UniRule"/>
</dbReference>
<dbReference type="CDD" id="cd09165">
    <property type="entry name" value="PLDc_PaPPK1_C1_like"/>
    <property type="match status" value="1"/>
</dbReference>
<dbReference type="CDD" id="cd09168">
    <property type="entry name" value="PLDc_PaPPK1_C2_like"/>
    <property type="match status" value="1"/>
</dbReference>
<dbReference type="FunFam" id="3.30.870.10:FF:000001">
    <property type="entry name" value="Polyphosphate kinase"/>
    <property type="match status" value="1"/>
</dbReference>
<dbReference type="Gene3D" id="3.30.870.10">
    <property type="entry name" value="Endonuclease Chain A"/>
    <property type="match status" value="2"/>
</dbReference>
<dbReference type="Gene3D" id="3.30.1840.10">
    <property type="entry name" value="Polyphosphate kinase middle domain"/>
    <property type="match status" value="1"/>
</dbReference>
<dbReference type="Gene3D" id="1.20.58.310">
    <property type="entry name" value="Polyphosphate kinase N-terminal domain"/>
    <property type="match status" value="1"/>
</dbReference>
<dbReference type="HAMAP" id="MF_00347">
    <property type="entry name" value="Polyphosphate_kinase"/>
    <property type="match status" value="1"/>
</dbReference>
<dbReference type="InterPro" id="IPR003414">
    <property type="entry name" value="PP_kinase"/>
</dbReference>
<dbReference type="InterPro" id="IPR041108">
    <property type="entry name" value="PP_kinase_C_1"/>
</dbReference>
<dbReference type="InterPro" id="IPR024953">
    <property type="entry name" value="PP_kinase_middle"/>
</dbReference>
<dbReference type="InterPro" id="IPR036830">
    <property type="entry name" value="PP_kinase_middle_dom_sf"/>
</dbReference>
<dbReference type="InterPro" id="IPR025200">
    <property type="entry name" value="PPK_C_dom2"/>
</dbReference>
<dbReference type="InterPro" id="IPR025198">
    <property type="entry name" value="PPK_N_dom"/>
</dbReference>
<dbReference type="InterPro" id="IPR036832">
    <property type="entry name" value="PPK_N_dom_sf"/>
</dbReference>
<dbReference type="NCBIfam" id="TIGR03705">
    <property type="entry name" value="poly_P_kin"/>
    <property type="match status" value="1"/>
</dbReference>
<dbReference type="NCBIfam" id="NF003917">
    <property type="entry name" value="PRK05443.1-1"/>
    <property type="match status" value="1"/>
</dbReference>
<dbReference type="NCBIfam" id="NF003918">
    <property type="entry name" value="PRK05443.1-2"/>
    <property type="match status" value="1"/>
</dbReference>
<dbReference type="NCBIfam" id="NF003919">
    <property type="entry name" value="PRK05443.1-4"/>
    <property type="match status" value="1"/>
</dbReference>
<dbReference type="NCBIfam" id="NF003921">
    <property type="entry name" value="PRK05443.2-2"/>
    <property type="match status" value="1"/>
</dbReference>
<dbReference type="PANTHER" id="PTHR30218">
    <property type="entry name" value="POLYPHOSPHATE KINASE"/>
    <property type="match status" value="1"/>
</dbReference>
<dbReference type="PANTHER" id="PTHR30218:SF0">
    <property type="entry name" value="POLYPHOSPHATE KINASE"/>
    <property type="match status" value="1"/>
</dbReference>
<dbReference type="Pfam" id="PF02503">
    <property type="entry name" value="PP_kinase"/>
    <property type="match status" value="1"/>
</dbReference>
<dbReference type="Pfam" id="PF13090">
    <property type="entry name" value="PP_kinase_C"/>
    <property type="match status" value="1"/>
</dbReference>
<dbReference type="Pfam" id="PF17941">
    <property type="entry name" value="PP_kinase_C_1"/>
    <property type="match status" value="1"/>
</dbReference>
<dbReference type="Pfam" id="PF13089">
    <property type="entry name" value="PP_kinase_N"/>
    <property type="match status" value="1"/>
</dbReference>
<dbReference type="PIRSF" id="PIRSF015589">
    <property type="entry name" value="PP_kinase"/>
    <property type="match status" value="1"/>
</dbReference>
<dbReference type="SUPFAM" id="SSF56024">
    <property type="entry name" value="Phospholipase D/nuclease"/>
    <property type="match status" value="2"/>
</dbReference>
<dbReference type="SUPFAM" id="SSF143724">
    <property type="entry name" value="PHP14-like"/>
    <property type="match status" value="1"/>
</dbReference>
<dbReference type="SUPFAM" id="SSF140356">
    <property type="entry name" value="PPK N-terminal domain-like"/>
    <property type="match status" value="1"/>
</dbReference>
<comment type="function">
    <text evidence="1">Catalyzes the reversible transfer of the terminal phosphate of ATP to form a long-chain polyphosphate (polyP).</text>
</comment>
<comment type="catalytic activity">
    <reaction evidence="1">
        <text>[phosphate](n) + ATP = [phosphate](n+1) + ADP</text>
        <dbReference type="Rhea" id="RHEA:19573"/>
        <dbReference type="Rhea" id="RHEA-COMP:9859"/>
        <dbReference type="Rhea" id="RHEA-COMP:14280"/>
        <dbReference type="ChEBI" id="CHEBI:16838"/>
        <dbReference type="ChEBI" id="CHEBI:30616"/>
        <dbReference type="ChEBI" id="CHEBI:456216"/>
        <dbReference type="EC" id="2.7.4.1"/>
    </reaction>
</comment>
<comment type="cofactor">
    <cofactor evidence="1">
        <name>Mg(2+)</name>
        <dbReference type="ChEBI" id="CHEBI:18420"/>
    </cofactor>
</comment>
<comment type="PTM">
    <text evidence="1">An intermediate of this reaction is the autophosphorylated ppk in which a phosphate is covalently linked to a histidine residue through a N-P bond.</text>
</comment>
<comment type="similarity">
    <text evidence="1">Belongs to the polyphosphate kinase 1 (PPK1) family.</text>
</comment>
<name>PPK1_BRASO</name>
<proteinExistence type="inferred from homology"/>
<feature type="chain" id="PRO_1000120497" description="Polyphosphate kinase">
    <location>
        <begin position="1"/>
        <end position="731"/>
    </location>
</feature>
<feature type="region of interest" description="Disordered" evidence="2">
    <location>
        <begin position="701"/>
        <end position="731"/>
    </location>
</feature>
<feature type="compositionally biased region" description="Basic and acidic residues" evidence="2">
    <location>
        <begin position="713"/>
        <end position="731"/>
    </location>
</feature>
<feature type="active site" description="Phosphohistidine intermediate" evidence="1">
    <location>
        <position position="452"/>
    </location>
</feature>
<feature type="binding site" evidence="1">
    <location>
        <position position="67"/>
    </location>
    <ligand>
        <name>ATP</name>
        <dbReference type="ChEBI" id="CHEBI:30616"/>
    </ligand>
</feature>
<feature type="binding site" evidence="1">
    <location>
        <position position="392"/>
    </location>
    <ligand>
        <name>Mg(2+)</name>
        <dbReference type="ChEBI" id="CHEBI:18420"/>
    </ligand>
</feature>
<feature type="binding site" evidence="1">
    <location>
        <position position="422"/>
    </location>
    <ligand>
        <name>Mg(2+)</name>
        <dbReference type="ChEBI" id="CHEBI:18420"/>
    </ligand>
</feature>
<feature type="binding site" evidence="1">
    <location>
        <position position="485"/>
    </location>
    <ligand>
        <name>ATP</name>
        <dbReference type="ChEBI" id="CHEBI:30616"/>
    </ligand>
</feature>
<feature type="binding site" evidence="1">
    <location>
        <position position="581"/>
    </location>
    <ligand>
        <name>ATP</name>
        <dbReference type="ChEBI" id="CHEBI:30616"/>
    </ligand>
</feature>
<feature type="binding site" evidence="1">
    <location>
        <position position="609"/>
    </location>
    <ligand>
        <name>ATP</name>
        <dbReference type="ChEBI" id="CHEBI:30616"/>
    </ligand>
</feature>
<sequence>MDTEQVTELAAKEPVAAPTNEIASSPERFINRELSWLHFNRRVLEESVNPRHPALERVRFLSISANNLDEFFMVRVAGIRAQVREGIAERSPDGLTPTEQLKLINETVSQLAIDQQAIWRDLRKFLAELGIVLVDGQDVTKAERAWIEDHFLANIFPLLTPLAIDPAHPFPFIPSLGFTVALQLTRTSDGRPMNALIRMPGKIDRFIRFPGAKDGVIRLITLEQATSLFIGRLFPGYTVKGQGAFRIIRDSEIEIEEEAEDLVRLFETALKRRRRGSVIRLEIEAAMPEELRQFVQDALATTDDEVFVVDGVLAMNELSQLTRVDRPDLEFAPYVPRHPERVRDHGGDIFAAIRQKDLIVHHPYESFDVVVQFLQQAARDPDVVAIKQTLYRTSNNSPIVRTLVEAAEAGKSVTALVELKARFDEEANIRWARDLERAGVQVVYGFLQLKTHAKLSMVVRREGGSLTTYVHTGTGNYHPVTARIYTDLSYFTSDPVIGRDVTRVFNYITGYAEPIDIEKMAVSPLTLRKRMIEHIHGETSFARQGKPAVIWMKMNSLVDPDIIDALYEASQAGVSIELIVRGICCLRPGIPGLSDNIRVKSVIGRFLEHGRIYCFGMGQGLPSAKAAVYISSADMMPRNLDRRVEVLCPLQNPTVHQQVLEQIMVANLKDTEQSWQLLPDGSSTRMKAAKGEEPFNLHNYFMTNPSLSGRGKSLKESSPRRLTRRNERPPS</sequence>